<organism>
    <name type="scientific">Staphylococcus haemolyticus (strain JCSC1435)</name>
    <dbReference type="NCBI Taxonomy" id="279808"/>
    <lineage>
        <taxon>Bacteria</taxon>
        <taxon>Bacillati</taxon>
        <taxon>Bacillota</taxon>
        <taxon>Bacilli</taxon>
        <taxon>Bacillales</taxon>
        <taxon>Staphylococcaceae</taxon>
        <taxon>Staphylococcus</taxon>
    </lineage>
</organism>
<evidence type="ECO:0000250" key="1">
    <source>
        <dbReference type="UniProtKB" id="A0A0H3KA40"/>
    </source>
</evidence>
<evidence type="ECO:0000250" key="2">
    <source>
        <dbReference type="UniProtKB" id="Q2FVT1"/>
    </source>
</evidence>
<evidence type="ECO:0000255" key="3"/>
<evidence type="ECO:0000256" key="4">
    <source>
        <dbReference type="SAM" id="MobiDB-lite"/>
    </source>
</evidence>
<evidence type="ECO:0000305" key="5"/>
<keyword id="KW-1003">Cell membrane</keyword>
<keyword id="KW-0134">Cell wall</keyword>
<keyword id="KW-0472">Membrane</keyword>
<keyword id="KW-0964">Secreted</keyword>
<keyword id="KW-0812">Transmembrane</keyword>
<keyword id="KW-1133">Transmembrane helix</keyword>
<comment type="function">
    <text evidence="2">Involved in bacterial cell envelope homeostasis. Regulates peptidoglycan processing, perhaps acting as a scaffold protein.</text>
</comment>
<comment type="subcellular location">
    <subcellularLocation>
        <location evidence="2">Cell membrane</location>
        <topology evidence="2">Multi-pass membrane protein</topology>
    </subcellularLocation>
    <subcellularLocation>
        <location evidence="1">Secreted</location>
        <location evidence="1">Cell wall</location>
    </subcellularLocation>
    <subcellularLocation>
        <location evidence="2">Cell septum</location>
    </subcellularLocation>
    <text evidence="1">Localization to the cross-wall is enriched in dividing cells.</text>
</comment>
<comment type="similarity">
    <text evidence="5">Belongs to the LyrA family.</text>
</comment>
<accession>Q4L8J4</accession>
<sequence length="363" mass="41346">MKTNRISGFQWALTIFVFFVVTMALSLILRDFQASVGIKRFVFDITDLAPFIAAIVCIIAFKDKRTQLAGLKFSVDIRVIERILLALILPLVIFMIGMFSFNTFADSFILLQATDLSVSVPTIIIGHILMAFFAEFGFRSYLQNIVENKVNTFFASIIVGLIYSIWAANTTYGMEYAGYHFLYTFMFSIIIGELIRATKGRTIYIALVFHASMSFAQVFLFSEETGDLFSMKVIALSTTLVGIVFIILSLIIRFIVYKTTNRSLDEVEPNNYLDHMNDDDTTTSNETKSEDHEHNDKKDSFTESQLNEDHVELKSQSENQTDSSNEKLKENTSYKEDRRSSVVDDAKDEIDQMKDTSSHKTEK</sequence>
<name>LYRA_STAHJ</name>
<protein>
    <recommendedName>
        <fullName>Lysostaphin resistance protein A</fullName>
    </recommendedName>
    <alternativeName>
        <fullName evidence="1">Surface protein display C</fullName>
    </alternativeName>
</protein>
<proteinExistence type="inferred from homology"/>
<gene>
    <name type="primary">lyrA</name>
    <name evidence="1" type="synonym">spdC</name>
    <name type="ordered locus">SH0722</name>
</gene>
<feature type="chain" id="PRO_0000274831" description="Lysostaphin resistance protein A">
    <location>
        <begin position="1"/>
        <end position="363"/>
    </location>
</feature>
<feature type="transmembrane region" description="Helical" evidence="3">
    <location>
        <begin position="9"/>
        <end position="29"/>
    </location>
</feature>
<feature type="transmembrane region" description="Helical" evidence="3">
    <location>
        <begin position="41"/>
        <end position="61"/>
    </location>
</feature>
<feature type="transmembrane region" description="Helical" evidence="3">
    <location>
        <begin position="83"/>
        <end position="103"/>
    </location>
</feature>
<feature type="transmembrane region" description="Helical" evidence="3">
    <location>
        <begin position="118"/>
        <end position="138"/>
    </location>
</feature>
<feature type="transmembrane region" description="Helical" evidence="3">
    <location>
        <begin position="153"/>
        <end position="173"/>
    </location>
</feature>
<feature type="transmembrane region" description="Helical" evidence="3">
    <location>
        <begin position="175"/>
        <end position="195"/>
    </location>
</feature>
<feature type="transmembrane region" description="Helical" evidence="3">
    <location>
        <begin position="202"/>
        <end position="222"/>
    </location>
</feature>
<feature type="transmembrane region" description="Helical" evidence="3">
    <location>
        <begin position="232"/>
        <end position="252"/>
    </location>
</feature>
<feature type="region of interest" description="Disordered" evidence="4">
    <location>
        <begin position="269"/>
        <end position="363"/>
    </location>
</feature>
<feature type="compositionally biased region" description="Basic and acidic residues" evidence="4">
    <location>
        <begin position="287"/>
        <end position="315"/>
    </location>
</feature>
<feature type="compositionally biased region" description="Basic and acidic residues" evidence="4">
    <location>
        <begin position="324"/>
        <end position="363"/>
    </location>
</feature>
<dbReference type="EMBL" id="AP006716">
    <property type="protein sequence ID" value="BAE04031.1"/>
    <property type="molecule type" value="Genomic_DNA"/>
</dbReference>
<dbReference type="RefSeq" id="WP_011275046.1">
    <property type="nucleotide sequence ID" value="NC_007168.1"/>
</dbReference>
<dbReference type="SMR" id="Q4L8J4"/>
<dbReference type="KEGG" id="sha:SH0722"/>
<dbReference type="eggNOG" id="COG1266">
    <property type="taxonomic scope" value="Bacteria"/>
</dbReference>
<dbReference type="HOGENOM" id="CLU_046135_0_0_9"/>
<dbReference type="OrthoDB" id="2413325at2"/>
<dbReference type="Proteomes" id="UP000000543">
    <property type="component" value="Chromosome"/>
</dbReference>
<dbReference type="GO" id="GO:0005886">
    <property type="term" value="C:plasma membrane"/>
    <property type="evidence" value="ECO:0007669"/>
    <property type="project" value="UniProtKB-SubCell"/>
</dbReference>
<dbReference type="GO" id="GO:0004175">
    <property type="term" value="F:endopeptidase activity"/>
    <property type="evidence" value="ECO:0007669"/>
    <property type="project" value="UniProtKB-ARBA"/>
</dbReference>
<dbReference type="GO" id="GO:0080120">
    <property type="term" value="P:CAAX-box protein maturation"/>
    <property type="evidence" value="ECO:0007669"/>
    <property type="project" value="UniProtKB-ARBA"/>
</dbReference>
<dbReference type="InterPro" id="IPR003675">
    <property type="entry name" value="Rce1/LyrA-like_dom"/>
</dbReference>
<dbReference type="Pfam" id="PF02517">
    <property type="entry name" value="Rce1-like"/>
    <property type="match status" value="1"/>
</dbReference>
<reference key="1">
    <citation type="journal article" date="2005" name="J. Bacteriol.">
        <title>Whole-genome sequencing of Staphylococcus haemolyticus uncovers the extreme plasticity of its genome and the evolution of human-colonizing staphylococcal species.</title>
        <authorList>
            <person name="Takeuchi F."/>
            <person name="Watanabe S."/>
            <person name="Baba T."/>
            <person name="Yuzawa H."/>
            <person name="Ito T."/>
            <person name="Morimoto Y."/>
            <person name="Kuroda M."/>
            <person name="Cui L."/>
            <person name="Takahashi M."/>
            <person name="Ankai A."/>
            <person name="Baba S."/>
            <person name="Fukui S."/>
            <person name="Lee J.C."/>
            <person name="Hiramatsu K."/>
        </authorList>
    </citation>
    <scope>NUCLEOTIDE SEQUENCE [LARGE SCALE GENOMIC DNA]</scope>
    <source>
        <strain>JCSC1435</strain>
    </source>
</reference>